<feature type="chain" id="PRO_0000108947" description="Undecaprenyl-phosphate alpha-N-acetylglucosaminyl 1-phosphate transferase">
    <location>
        <begin position="1"/>
        <end position="365"/>
    </location>
</feature>
<feature type="transmembrane region" description="Helical" evidence="1">
    <location>
        <begin position="3"/>
        <end position="23"/>
    </location>
</feature>
<feature type="transmembrane region" description="Helical" evidence="1">
    <location>
        <begin position="45"/>
        <end position="65"/>
    </location>
</feature>
<feature type="transmembrane region" description="Helical" evidence="1">
    <location>
        <begin position="99"/>
        <end position="119"/>
    </location>
</feature>
<feature type="transmembrane region" description="Helical" evidence="1">
    <location>
        <begin position="132"/>
        <end position="152"/>
    </location>
</feature>
<feature type="transmembrane region" description="Helical" evidence="1">
    <location>
        <begin position="157"/>
        <end position="177"/>
    </location>
</feature>
<feature type="transmembrane region" description="Helical" evidence="1">
    <location>
        <begin position="187"/>
        <end position="207"/>
    </location>
</feature>
<feature type="transmembrane region" description="Helical" evidence="1">
    <location>
        <begin position="213"/>
        <end position="233"/>
    </location>
</feature>
<feature type="transmembrane region" description="Helical" evidence="1">
    <location>
        <begin position="242"/>
        <end position="262"/>
    </location>
</feature>
<feature type="transmembrane region" description="Helical" evidence="1">
    <location>
        <begin position="293"/>
        <end position="313"/>
    </location>
</feature>
<feature type="transmembrane region" description="Helical" evidence="1">
    <location>
        <begin position="315"/>
        <end position="335"/>
    </location>
</feature>
<reference key="1">
    <citation type="journal article" date="2001" name="Nature">
        <title>Genome sequence of Yersinia pestis, the causative agent of plague.</title>
        <authorList>
            <person name="Parkhill J."/>
            <person name="Wren B.W."/>
            <person name="Thomson N.R."/>
            <person name="Titball R.W."/>
            <person name="Holden M.T.G."/>
            <person name="Prentice M.B."/>
            <person name="Sebaihia M."/>
            <person name="James K.D."/>
            <person name="Churcher C.M."/>
            <person name="Mungall K.L."/>
            <person name="Baker S."/>
            <person name="Basham D."/>
            <person name="Bentley S.D."/>
            <person name="Brooks K."/>
            <person name="Cerdeno-Tarraga A.-M."/>
            <person name="Chillingworth T."/>
            <person name="Cronin A."/>
            <person name="Davies R.M."/>
            <person name="Davis P."/>
            <person name="Dougan G."/>
            <person name="Feltwell T."/>
            <person name="Hamlin N."/>
            <person name="Holroyd S."/>
            <person name="Jagels K."/>
            <person name="Karlyshev A.V."/>
            <person name="Leather S."/>
            <person name="Moule S."/>
            <person name="Oyston P.C.F."/>
            <person name="Quail M.A."/>
            <person name="Rutherford K.M."/>
            <person name="Simmonds M."/>
            <person name="Skelton J."/>
            <person name="Stevens K."/>
            <person name="Whitehead S."/>
            <person name="Barrell B.G."/>
        </authorList>
    </citation>
    <scope>NUCLEOTIDE SEQUENCE [LARGE SCALE GENOMIC DNA]</scope>
    <source>
        <strain>CO-92 / Biovar Orientalis</strain>
    </source>
</reference>
<reference key="2">
    <citation type="journal article" date="2002" name="J. Bacteriol.">
        <title>Genome sequence of Yersinia pestis KIM.</title>
        <authorList>
            <person name="Deng W."/>
            <person name="Burland V."/>
            <person name="Plunkett G. III"/>
            <person name="Boutin A."/>
            <person name="Mayhew G.F."/>
            <person name="Liss P."/>
            <person name="Perna N.T."/>
            <person name="Rose D.J."/>
            <person name="Mau B."/>
            <person name="Zhou S."/>
            <person name="Schwartz D.C."/>
            <person name="Fetherston J.D."/>
            <person name="Lindler L.E."/>
            <person name="Brubaker R.R."/>
            <person name="Plano G.V."/>
            <person name="Straley S.C."/>
            <person name="McDonough K.A."/>
            <person name="Nilles M.L."/>
            <person name="Matson J.S."/>
            <person name="Blattner F.R."/>
            <person name="Perry R.D."/>
        </authorList>
    </citation>
    <scope>NUCLEOTIDE SEQUENCE [LARGE SCALE GENOMIC DNA]</scope>
    <source>
        <strain>KIM10+ / Biovar Mediaevalis</strain>
    </source>
</reference>
<reference key="3">
    <citation type="journal article" date="2004" name="DNA Res.">
        <title>Complete genome sequence of Yersinia pestis strain 91001, an isolate avirulent to humans.</title>
        <authorList>
            <person name="Song Y."/>
            <person name="Tong Z."/>
            <person name="Wang J."/>
            <person name="Wang L."/>
            <person name="Guo Z."/>
            <person name="Han Y."/>
            <person name="Zhang J."/>
            <person name="Pei D."/>
            <person name="Zhou D."/>
            <person name="Qin H."/>
            <person name="Pang X."/>
            <person name="Han Y."/>
            <person name="Zhai J."/>
            <person name="Li M."/>
            <person name="Cui B."/>
            <person name="Qi Z."/>
            <person name="Jin L."/>
            <person name="Dai R."/>
            <person name="Chen F."/>
            <person name="Li S."/>
            <person name="Ye C."/>
            <person name="Du Z."/>
            <person name="Lin W."/>
            <person name="Wang J."/>
            <person name="Yu J."/>
            <person name="Yang H."/>
            <person name="Wang J."/>
            <person name="Huang P."/>
            <person name="Yang R."/>
        </authorList>
    </citation>
    <scope>NUCLEOTIDE SEQUENCE [LARGE SCALE GENOMIC DNA]</scope>
    <source>
        <strain>91001 / Biovar Mediaevalis</strain>
    </source>
</reference>
<name>WECA_YERPE</name>
<comment type="function">
    <text evidence="1">Catalyzes the transfer of the GlcNAc-1-phosphate moiety from UDP-GlcNAc onto the carrier lipid undecaprenyl phosphate (C55-P), yielding GlcNAc-pyrophosphoryl-undecaprenyl (GlcNAc-PP-C55).</text>
</comment>
<comment type="catalytic activity">
    <reaction evidence="1">
        <text>di-trans,octa-cis-undecaprenyl phosphate + UDP-N-acetyl-alpha-D-glucosamine = N-acetyl-alpha-D-glucosaminyl-di-trans,octa-cis-undecaprenyl diphosphate + UMP</text>
        <dbReference type="Rhea" id="RHEA:28090"/>
        <dbReference type="ChEBI" id="CHEBI:57705"/>
        <dbReference type="ChEBI" id="CHEBI:57865"/>
        <dbReference type="ChEBI" id="CHEBI:60392"/>
        <dbReference type="ChEBI" id="CHEBI:62959"/>
        <dbReference type="EC" id="2.7.8.33"/>
    </reaction>
</comment>
<comment type="cofactor">
    <cofactor evidence="1">
        <name>Mg(2+)</name>
        <dbReference type="ChEBI" id="CHEBI:18420"/>
    </cofactor>
</comment>
<comment type="cofactor">
    <cofactor evidence="1">
        <name>Mn(2+)</name>
        <dbReference type="ChEBI" id="CHEBI:29035"/>
    </cofactor>
</comment>
<comment type="pathway">
    <text evidence="1">Bacterial outer membrane biogenesis; LPS O-antigen biosynthesis.</text>
</comment>
<comment type="pathway">
    <text evidence="1">Bacterial outer membrane biogenesis; enterobacterial common antigen biosynthesis.</text>
</comment>
<comment type="subcellular location">
    <subcellularLocation>
        <location evidence="1">Cell inner membrane</location>
        <topology evidence="1">Multi-pass membrane protein</topology>
    </subcellularLocation>
</comment>
<comment type="similarity">
    <text evidence="1">Belongs to the glycosyltransferase 4 family. WecA subfamily.</text>
</comment>
<gene>
    <name evidence="1" type="primary">wecA</name>
    <name type="synonym">rfe</name>
    <name type="ordered locus">YPO3866</name>
    <name type="ordered locus">y0362</name>
    <name type="ordered locus">YP_3179</name>
</gene>
<dbReference type="EC" id="2.7.8.33" evidence="1"/>
<dbReference type="EMBL" id="AL590842">
    <property type="protein sequence ID" value="CAL22453.1"/>
    <property type="molecule type" value="Genomic_DNA"/>
</dbReference>
<dbReference type="EMBL" id="AE009952">
    <property type="protein sequence ID" value="AAM83951.1"/>
    <property type="molecule type" value="Genomic_DNA"/>
</dbReference>
<dbReference type="EMBL" id="AE017042">
    <property type="protein sequence ID" value="AAS63347.1"/>
    <property type="molecule type" value="Genomic_DNA"/>
</dbReference>
<dbReference type="PIR" id="AB0471">
    <property type="entry name" value="AB0471"/>
</dbReference>
<dbReference type="RefSeq" id="WP_002211988.1">
    <property type="nucleotide sequence ID" value="NZ_WUCM01000073.1"/>
</dbReference>
<dbReference type="RefSeq" id="YP_002348744.1">
    <property type="nucleotide sequence ID" value="NC_003143.1"/>
</dbReference>
<dbReference type="SMR" id="Q8ZAE1"/>
<dbReference type="IntAct" id="Q8ZAE1">
    <property type="interactions" value="3"/>
</dbReference>
<dbReference type="STRING" id="214092.YPO3866"/>
<dbReference type="PaxDb" id="214092-YPO3866"/>
<dbReference type="DNASU" id="1145309"/>
<dbReference type="EnsemblBacteria" id="AAS63347">
    <property type="protein sequence ID" value="AAS63347"/>
    <property type="gene ID" value="YP_3179"/>
</dbReference>
<dbReference type="GeneID" id="57974837"/>
<dbReference type="KEGG" id="ype:YPO3866"/>
<dbReference type="KEGG" id="ypk:y0362"/>
<dbReference type="KEGG" id="ypm:YP_3179"/>
<dbReference type="PATRIC" id="fig|214092.21.peg.4392"/>
<dbReference type="eggNOG" id="COG0472">
    <property type="taxonomic scope" value="Bacteria"/>
</dbReference>
<dbReference type="HOGENOM" id="CLU_023982_1_0_6"/>
<dbReference type="OMA" id="MCLGFLP"/>
<dbReference type="OrthoDB" id="9783652at2"/>
<dbReference type="UniPathway" id="UPA00281"/>
<dbReference type="UniPathway" id="UPA00566"/>
<dbReference type="Proteomes" id="UP000000815">
    <property type="component" value="Chromosome"/>
</dbReference>
<dbReference type="Proteomes" id="UP000001019">
    <property type="component" value="Chromosome"/>
</dbReference>
<dbReference type="Proteomes" id="UP000002490">
    <property type="component" value="Chromosome"/>
</dbReference>
<dbReference type="GO" id="GO:0009276">
    <property type="term" value="C:Gram-negative-bacterium-type cell wall"/>
    <property type="evidence" value="ECO:0000250"/>
    <property type="project" value="UniProtKB"/>
</dbReference>
<dbReference type="GO" id="GO:0005886">
    <property type="term" value="C:plasma membrane"/>
    <property type="evidence" value="ECO:0000318"/>
    <property type="project" value="GO_Central"/>
</dbReference>
<dbReference type="GO" id="GO:0016757">
    <property type="term" value="F:glycosyltransferase activity"/>
    <property type="evidence" value="ECO:0007669"/>
    <property type="project" value="UniProtKB-KW"/>
</dbReference>
<dbReference type="GO" id="GO:0000287">
    <property type="term" value="F:magnesium ion binding"/>
    <property type="evidence" value="ECO:0000250"/>
    <property type="project" value="UniProtKB"/>
</dbReference>
<dbReference type="GO" id="GO:0030145">
    <property type="term" value="F:manganese ion binding"/>
    <property type="evidence" value="ECO:0000250"/>
    <property type="project" value="UniProtKB"/>
</dbReference>
<dbReference type="GO" id="GO:0016780">
    <property type="term" value="F:phosphotransferase activity, for other substituted phosphate groups"/>
    <property type="evidence" value="ECO:0000250"/>
    <property type="project" value="UniProtKB"/>
</dbReference>
<dbReference type="GO" id="GO:0036380">
    <property type="term" value="F:UDP-N-acetylglucosamine-undecaprenyl-phosphate N-acetylglucosaminephosphotransferase activity"/>
    <property type="evidence" value="ECO:0007669"/>
    <property type="project" value="UniProtKB-UniRule"/>
</dbReference>
<dbReference type="GO" id="GO:0044038">
    <property type="term" value="P:cell wall macromolecule biosynthetic process"/>
    <property type="evidence" value="ECO:0000250"/>
    <property type="project" value="UniProtKB"/>
</dbReference>
<dbReference type="GO" id="GO:0071555">
    <property type="term" value="P:cell wall organization"/>
    <property type="evidence" value="ECO:0000250"/>
    <property type="project" value="UniProtKB"/>
</dbReference>
<dbReference type="GO" id="GO:0009246">
    <property type="term" value="P:enterobacterial common antigen biosynthetic process"/>
    <property type="evidence" value="ECO:0007669"/>
    <property type="project" value="UniProtKB-UniRule"/>
</dbReference>
<dbReference type="GO" id="GO:0009103">
    <property type="term" value="P:lipopolysaccharide biosynthetic process"/>
    <property type="evidence" value="ECO:0000250"/>
    <property type="project" value="UniProtKB"/>
</dbReference>
<dbReference type="GO" id="GO:0009243">
    <property type="term" value="P:O antigen biosynthetic process"/>
    <property type="evidence" value="ECO:0007669"/>
    <property type="project" value="UniProtKB-UniRule"/>
</dbReference>
<dbReference type="CDD" id="cd06853">
    <property type="entry name" value="GT_WecA_like"/>
    <property type="match status" value="1"/>
</dbReference>
<dbReference type="HAMAP" id="MF_02030">
    <property type="entry name" value="WecA_Gammaproteo"/>
    <property type="match status" value="1"/>
</dbReference>
<dbReference type="InterPro" id="IPR012750">
    <property type="entry name" value="ECA_WecA-rel"/>
</dbReference>
<dbReference type="InterPro" id="IPR000715">
    <property type="entry name" value="Glycosyl_transferase_4"/>
</dbReference>
<dbReference type="NCBIfam" id="TIGR02380">
    <property type="entry name" value="ECA_wecA"/>
    <property type="match status" value="1"/>
</dbReference>
<dbReference type="PANTHER" id="PTHR22926">
    <property type="entry name" value="PHOSPHO-N-ACETYLMURAMOYL-PENTAPEPTIDE-TRANSFERASE"/>
    <property type="match status" value="1"/>
</dbReference>
<dbReference type="PANTHER" id="PTHR22926:SF3">
    <property type="entry name" value="UNDECAPRENYL-PHOSPHATE ALPHA-N-ACETYLGLUCOSAMINYL 1-PHOSPHATE TRANSFERASE"/>
    <property type="match status" value="1"/>
</dbReference>
<dbReference type="Pfam" id="PF00953">
    <property type="entry name" value="Glycos_transf_4"/>
    <property type="match status" value="1"/>
</dbReference>
<evidence type="ECO:0000255" key="1">
    <source>
        <dbReference type="HAMAP-Rule" id="MF_02030"/>
    </source>
</evidence>
<keyword id="KW-0997">Cell inner membrane</keyword>
<keyword id="KW-1003">Cell membrane</keyword>
<keyword id="KW-0328">Glycosyltransferase</keyword>
<keyword id="KW-0448">Lipopolysaccharide biosynthesis</keyword>
<keyword id="KW-0460">Magnesium</keyword>
<keyword id="KW-0464">Manganese</keyword>
<keyword id="KW-0472">Membrane</keyword>
<keyword id="KW-1185">Reference proteome</keyword>
<keyword id="KW-0808">Transferase</keyword>
<keyword id="KW-0812">Transmembrane</keyword>
<keyword id="KW-1133">Transmembrane helix</keyword>
<organism>
    <name type="scientific">Yersinia pestis</name>
    <dbReference type="NCBI Taxonomy" id="632"/>
    <lineage>
        <taxon>Bacteria</taxon>
        <taxon>Pseudomonadati</taxon>
        <taxon>Pseudomonadota</taxon>
        <taxon>Gammaproteobacteria</taxon>
        <taxon>Enterobacterales</taxon>
        <taxon>Yersiniaceae</taxon>
        <taxon>Yersinia</taxon>
    </lineage>
</organism>
<accession>Q8ZAE1</accession>
<accession>Q0WAE4</accession>
<proteinExistence type="inferred from homology"/>
<sequence>MNLLTMSTELIYIFLFSMAFLFVARKVAIKIGLVDKPNYRKRHQGLIPLVGGISVFAGVCFAFLITNQQIPHFRLYLACAGLLVFVGALDDRFDISVKIRAFVQALVGIAMMAVAGLYLRSLGHAFGPWEMVLGPFGYVVTLFAVWAAINAFNMVDGIDGLLGGLSCVSFGAMGILLYQSGQMSLALWCFAMIATIIPYILLNLGLLGRRYKVFMGDAGSTLIGFTAIWILLQATQGNAHPINPVTALWIIAIPLMDMIAIMYRRLRKGMSPFSPDRQHIHHLIMRAGFTSRQAFVLITLAAALLAMIGVIGERLTFIPEWVMLALFLLAFLLYGYCIKRAWRVARFIKRFKRRMRRASKNKHES</sequence>
<protein>
    <recommendedName>
        <fullName evidence="1">Undecaprenyl-phosphate alpha-N-acetylglucosaminyl 1-phosphate transferase</fullName>
        <ecNumber evidence="1">2.7.8.33</ecNumber>
    </recommendedName>
    <alternativeName>
        <fullName evidence="1">UDP-GlcNAc:undecaprenyl-phosphate GlcNAc-1-phosphate transferase</fullName>
    </alternativeName>
    <alternativeName>
        <fullName evidence="1">Undecaprenyl-phosphate GlcNAc-1-phosphate transferase</fullName>
    </alternativeName>
</protein>